<feature type="signal peptide" evidence="2">
    <location>
        <begin position="1"/>
        <end position="19"/>
    </location>
</feature>
<feature type="chain" id="PRO_0000394096" description="Beta-glucosidase A">
    <location>
        <begin position="20"/>
        <end position="860"/>
    </location>
</feature>
<feature type="region of interest" description="Disordered" evidence="3">
    <location>
        <begin position="719"/>
        <end position="753"/>
    </location>
</feature>
<feature type="active site" evidence="1">
    <location>
        <position position="280"/>
    </location>
</feature>
<feature type="glycosylation site" description="N-linked (GlcNAc...) asparagine" evidence="2">
    <location>
        <position position="61"/>
    </location>
</feature>
<feature type="glycosylation site" description="N-linked (GlcNAc...) asparagine" evidence="2">
    <location>
        <position position="211"/>
    </location>
</feature>
<feature type="glycosylation site" description="N-linked (GlcNAc...) asparagine" evidence="2">
    <location>
        <position position="252"/>
    </location>
</feature>
<feature type="glycosylation site" description="N-linked (GlcNAc...) asparagine" evidence="2">
    <location>
        <position position="315"/>
    </location>
</feature>
<feature type="glycosylation site" description="N-linked (GlcNAc...) asparagine" evidence="2">
    <location>
        <position position="322"/>
    </location>
</feature>
<feature type="glycosylation site" description="N-linked (GlcNAc...) asparagine" evidence="2">
    <location>
        <position position="354"/>
    </location>
</feature>
<feature type="glycosylation site" description="N-linked (GlcNAc...) asparagine" evidence="2">
    <location>
        <position position="387"/>
    </location>
</feature>
<feature type="glycosylation site" description="N-linked (GlcNAc...) asparagine" evidence="2">
    <location>
        <position position="442"/>
    </location>
</feature>
<feature type="glycosylation site" description="N-linked (GlcNAc...) asparagine" evidence="2">
    <location>
        <position position="523"/>
    </location>
</feature>
<feature type="glycosylation site" description="N-linked (GlcNAc...) asparagine" evidence="2">
    <location>
        <position position="542"/>
    </location>
</feature>
<feature type="glycosylation site" description="N-linked (GlcNAc...) asparagine" evidence="2">
    <location>
        <position position="564"/>
    </location>
</feature>
<feature type="glycosylation site" description="N-linked (GlcNAc...) asparagine" evidence="2">
    <location>
        <position position="658"/>
    </location>
</feature>
<feature type="glycosylation site" description="N-linked (GlcNAc...) asparagine" evidence="2">
    <location>
        <position position="690"/>
    </location>
</feature>
<feature type="glycosylation site" description="N-linked (GlcNAc...) asparagine" evidence="2">
    <location>
        <position position="712"/>
    </location>
</feature>
<feature type="sequence conflict" description="In Ref. 1; BAA19913." evidence="5" ref="1">
    <original>R</original>
    <variation>K</variation>
    <location>
        <position position="522"/>
    </location>
</feature>
<feature type="sequence conflict" description="In Ref. 1; BAA19913." evidence="5" ref="1">
    <original>L</original>
    <variation>P</variation>
    <location>
        <position position="850"/>
    </location>
</feature>
<keyword id="KW-0119">Carbohydrate metabolism</keyword>
<keyword id="KW-0136">Cellulose degradation</keyword>
<keyword id="KW-0903">Direct protein sequencing</keyword>
<keyword id="KW-0325">Glycoprotein</keyword>
<keyword id="KW-0326">Glycosidase</keyword>
<keyword id="KW-0378">Hydrolase</keyword>
<keyword id="KW-0624">Polysaccharide degradation</keyword>
<keyword id="KW-0964">Secreted</keyword>
<keyword id="KW-0732">Signal</keyword>
<accession>P87076</accession>
<accession>G7X8K7</accession>
<proteinExistence type="evidence at protein level"/>
<name>BGLA_ASPKW</name>
<reference key="1">
    <citation type="journal article" date="1999" name="Appl. Environ. Microbiol.">
        <title>The bglA gene of Aspergillus kawachii encodes both extracellular and cell wall-bound beta-glucosidases.</title>
        <authorList>
            <person name="Iwashita K."/>
            <person name="Nagahara T."/>
            <person name="Kimura H."/>
            <person name="Takano M."/>
            <person name="Shimoi H."/>
            <person name="Ito K."/>
        </authorList>
    </citation>
    <scope>NUCLEOTIDE SEQUENCE [GENOMIC DNA]</scope>
    <scope>PROTEIN SEQUENCE OF 178-189; 405-414 AND 603-618</scope>
    <scope>SUBCELLULAR LOCATION</scope>
    <scope>FUNCTION</scope>
    <scope>CATALYTIC ACTIVITY</scope>
    <source>
        <strain>NBRC 4308</strain>
    </source>
</reference>
<reference key="2">
    <citation type="journal article" date="2011" name="Eukaryot. Cell">
        <title>Genome sequence of the white koji mold Aspergillus kawachii IFO 4308, used for brewing the Japanese distilled spirit shochu.</title>
        <authorList>
            <person name="Futagami T."/>
            <person name="Mori K."/>
            <person name="Yamashita A."/>
            <person name="Wada S."/>
            <person name="Kajiwara Y."/>
            <person name="Takashita H."/>
            <person name="Omori T."/>
            <person name="Takegawa K."/>
            <person name="Tashiro K."/>
            <person name="Kuhara S."/>
            <person name="Goto M."/>
        </authorList>
    </citation>
    <scope>NUCLEOTIDE SEQUENCE [LARGE SCALE GENOMIC DNA]</scope>
    <source>
        <strain>NBRC 4308</strain>
    </source>
</reference>
<sequence>MRFTLIEAVALTAVSLASADELAYSPPYYPSPWANGQGDWAQAYQRAVDIVSQMTLAEKVNLTTGTGWELELCVGQTGGVPRLGVPGMCLQDSPLGVRDSDYNSAFPSGMNVAATWDKNLAYLRGKAMGQEFSDKGADIQLGPAAGPLGRSPDGGRNWEGFSPDPALSGVLFAETIKGIQDAGVVATAKHYIAYEQEHFRQAPEAQGYGFNISESGSANLDDKTMHELYLWPFADAIRAGAGAVMCSYNQINNSYGCQNSYTLNKLLKAELGFQGFVMSDWAAHHAGVSGALAGLDMSMPGDVDYDSGTSYWGTNLTVSVLNGTVPQWRVDDMAVRIMAAYYKVGRDRLWTPPNFSSWTRDEYGYKYYYVSEGPYEKVNHYVNVQRNHSELIRRIGADSTVLLKNDGALPLTGKERLVALIGEDAGSNPYGANGCSDRGCDNGTLAMGWGSGTANFPYLVTPEQAISNEVLKNKNGVFTATDNWAIDQIEALAKTASVSLVFVNADSGEGYINVDGNLGDRRNLTLWRNGDNVIKAAASNCNNTIVIIHSVGPVLVNEWYDNPNVTAILWGGLPGQESGNSLADVLYGRVNPGAKSPFTWGKTREAYQDYLVTEPNNGNGAPQEDFVEGVFIDYRGFDKRNETPIYEFGYGLSYTTFNYSNLEVQVLSAPAYEPASGETEAAPTFGEVGNASNYLYPDGLQKITKFIYPWLNSTDLEASSGDASYGQDSSDYLPEGATDGSAQPILPAGGGPGGNPRLYDELIRVSVTIKNTGKVAGDEVPQLYVSLGGPNEPKIVLRQFERITLQPSEETKWSTTLTRRDLANWNVEKQDWEITSYPKMVFVGSSSRKLPLRASLPTVH</sequence>
<evidence type="ECO:0000250" key="1">
    <source>
        <dbReference type="UniProtKB" id="P29090"/>
    </source>
</evidence>
<evidence type="ECO:0000255" key="2"/>
<evidence type="ECO:0000256" key="3">
    <source>
        <dbReference type="SAM" id="MobiDB-lite"/>
    </source>
</evidence>
<evidence type="ECO:0000269" key="4">
    <source>
    </source>
</evidence>
<evidence type="ECO:0000305" key="5"/>
<evidence type="ECO:0000305" key="6">
    <source>
    </source>
</evidence>
<gene>
    <name type="primary">bglA</name>
    <name type="synonym">bgl1</name>
    <name type="ORF">AKAW_01481</name>
</gene>
<dbReference type="EC" id="3.2.1.21"/>
<dbReference type="EMBL" id="AB003470">
    <property type="protein sequence ID" value="BAA19913.1"/>
    <property type="molecule type" value="Genomic_DNA"/>
</dbReference>
<dbReference type="EMBL" id="DF126449">
    <property type="protein sequence ID" value="GAA83366.1"/>
    <property type="molecule type" value="Genomic_DNA"/>
</dbReference>
<dbReference type="SMR" id="P87076"/>
<dbReference type="STRING" id="1033177.P87076"/>
<dbReference type="CAZy" id="GH3">
    <property type="family name" value="Glycoside Hydrolase Family 3"/>
</dbReference>
<dbReference type="GlyCosmos" id="P87076">
    <property type="glycosylation" value="14 sites, No reported glycans"/>
</dbReference>
<dbReference type="VEuPathDB" id="FungiDB:AKAW_01481"/>
<dbReference type="eggNOG" id="ENOG502QR4D">
    <property type="taxonomic scope" value="Eukaryota"/>
</dbReference>
<dbReference type="InParanoid" id="P87076"/>
<dbReference type="OrthoDB" id="25956at5052"/>
<dbReference type="UniPathway" id="UPA00696"/>
<dbReference type="GO" id="GO:0005576">
    <property type="term" value="C:extracellular region"/>
    <property type="evidence" value="ECO:0007669"/>
    <property type="project" value="UniProtKB-SubCell"/>
</dbReference>
<dbReference type="GO" id="GO:0008422">
    <property type="term" value="F:beta-glucosidase activity"/>
    <property type="evidence" value="ECO:0007669"/>
    <property type="project" value="UniProtKB-EC"/>
</dbReference>
<dbReference type="GO" id="GO:0030245">
    <property type="term" value="P:cellulose catabolic process"/>
    <property type="evidence" value="ECO:0007669"/>
    <property type="project" value="UniProtKB-UniPathway"/>
</dbReference>
<dbReference type="FunFam" id="2.60.40.10:FF:001391">
    <property type="entry name" value="Beta-glucosidase"/>
    <property type="match status" value="1"/>
</dbReference>
<dbReference type="FunFam" id="3.20.20.300:FF:000002">
    <property type="entry name" value="Probable beta-glucosidase"/>
    <property type="match status" value="1"/>
</dbReference>
<dbReference type="FunFam" id="3.40.50.1700:FF:000003">
    <property type="entry name" value="Probable beta-glucosidase"/>
    <property type="match status" value="1"/>
</dbReference>
<dbReference type="Gene3D" id="3.40.50.1700">
    <property type="entry name" value="Glycoside hydrolase family 3 C-terminal domain"/>
    <property type="match status" value="1"/>
</dbReference>
<dbReference type="Gene3D" id="3.20.20.300">
    <property type="entry name" value="Glycoside hydrolase, family 3, N-terminal domain"/>
    <property type="match status" value="1"/>
</dbReference>
<dbReference type="Gene3D" id="2.60.40.10">
    <property type="entry name" value="Immunoglobulins"/>
    <property type="match status" value="1"/>
</dbReference>
<dbReference type="InterPro" id="IPR050288">
    <property type="entry name" value="Cellulose_deg_GH3"/>
</dbReference>
<dbReference type="InterPro" id="IPR026891">
    <property type="entry name" value="Fn3-like"/>
</dbReference>
<dbReference type="InterPro" id="IPR019800">
    <property type="entry name" value="Glyco_hydro_3_AS"/>
</dbReference>
<dbReference type="InterPro" id="IPR002772">
    <property type="entry name" value="Glyco_hydro_3_C"/>
</dbReference>
<dbReference type="InterPro" id="IPR036881">
    <property type="entry name" value="Glyco_hydro_3_C_sf"/>
</dbReference>
<dbReference type="InterPro" id="IPR001764">
    <property type="entry name" value="Glyco_hydro_3_N"/>
</dbReference>
<dbReference type="InterPro" id="IPR036962">
    <property type="entry name" value="Glyco_hydro_3_N_sf"/>
</dbReference>
<dbReference type="InterPro" id="IPR017853">
    <property type="entry name" value="Glycoside_hydrolase_SF"/>
</dbReference>
<dbReference type="InterPro" id="IPR013783">
    <property type="entry name" value="Ig-like_fold"/>
</dbReference>
<dbReference type="PANTHER" id="PTHR42715">
    <property type="entry name" value="BETA-GLUCOSIDASE"/>
    <property type="match status" value="1"/>
</dbReference>
<dbReference type="PANTHER" id="PTHR42715:SF29">
    <property type="entry name" value="BETA-GLUCOSIDASE A-RELATED"/>
    <property type="match status" value="1"/>
</dbReference>
<dbReference type="Pfam" id="PF14310">
    <property type="entry name" value="Fn3-like"/>
    <property type="match status" value="1"/>
</dbReference>
<dbReference type="Pfam" id="PF00933">
    <property type="entry name" value="Glyco_hydro_3"/>
    <property type="match status" value="1"/>
</dbReference>
<dbReference type="Pfam" id="PF01915">
    <property type="entry name" value="Glyco_hydro_3_C"/>
    <property type="match status" value="1"/>
</dbReference>
<dbReference type="PRINTS" id="PR00133">
    <property type="entry name" value="GLHYDRLASE3"/>
</dbReference>
<dbReference type="SMART" id="SM01217">
    <property type="entry name" value="Fn3_like"/>
    <property type="match status" value="1"/>
</dbReference>
<dbReference type="SUPFAM" id="SSF51445">
    <property type="entry name" value="(Trans)glycosidases"/>
    <property type="match status" value="1"/>
</dbReference>
<dbReference type="SUPFAM" id="SSF52279">
    <property type="entry name" value="Beta-D-glucan exohydrolase, C-terminal domain"/>
    <property type="match status" value="1"/>
</dbReference>
<dbReference type="PROSITE" id="PS00775">
    <property type="entry name" value="GLYCOSYL_HYDROL_F3"/>
    <property type="match status" value="1"/>
</dbReference>
<protein>
    <recommendedName>
        <fullName>Beta-glucosidase A</fullName>
        <ecNumber>3.2.1.21</ecNumber>
    </recommendedName>
    <alternativeName>
        <fullName>Beta-D-glucoside glucohydrolase A</fullName>
    </alternativeName>
    <alternativeName>
        <fullName>Cellobiase A</fullName>
    </alternativeName>
    <alternativeName>
        <fullName>Gentiobiase A</fullName>
    </alternativeName>
</protein>
<comment type="function">
    <text evidence="4">Beta-glucosidases are one of a number of cellulolytic enzymes involved in the degradation of cellulosic biomass. Catalyzes the last step releasing glucose from the inhibitory cellobiose.</text>
</comment>
<comment type="catalytic activity">
    <reaction evidence="4">
        <text>Hydrolysis of terminal, non-reducing beta-D-glucosyl residues with release of beta-D-glucose.</text>
        <dbReference type="EC" id="3.2.1.21"/>
    </reaction>
</comment>
<comment type="pathway">
    <text evidence="4">Glycan metabolism; cellulose degradation.</text>
</comment>
<comment type="subcellular location">
    <subcellularLocation>
        <location evidence="6">Secreted</location>
    </subcellularLocation>
</comment>
<comment type="similarity">
    <text evidence="5">Belongs to the glycosyl hydrolase 3 family.</text>
</comment>
<organism>
    <name type="scientific">Aspergillus kawachii (strain NBRC 4308)</name>
    <name type="common">White koji mold</name>
    <name type="synonym">Aspergillus awamori var. kawachi</name>
    <dbReference type="NCBI Taxonomy" id="1033177"/>
    <lineage>
        <taxon>Eukaryota</taxon>
        <taxon>Fungi</taxon>
        <taxon>Dikarya</taxon>
        <taxon>Ascomycota</taxon>
        <taxon>Pezizomycotina</taxon>
        <taxon>Eurotiomycetes</taxon>
        <taxon>Eurotiomycetidae</taxon>
        <taxon>Eurotiales</taxon>
        <taxon>Aspergillaceae</taxon>
        <taxon>Aspergillus</taxon>
        <taxon>Aspergillus subgen. Circumdati</taxon>
    </lineage>
</organism>